<dbReference type="EMBL" id="BA000012">
    <property type="protein sequence ID" value="BAB47925.1"/>
    <property type="molecule type" value="Genomic_DNA"/>
</dbReference>
<dbReference type="RefSeq" id="WP_010909286.1">
    <property type="nucleotide sequence ID" value="NC_002678.2"/>
</dbReference>
<dbReference type="SMR" id="Q98N38"/>
<dbReference type="GeneID" id="66684197"/>
<dbReference type="KEGG" id="mlo:mlr0318"/>
<dbReference type="eggNOG" id="COG0200">
    <property type="taxonomic scope" value="Bacteria"/>
</dbReference>
<dbReference type="HOGENOM" id="CLU_055188_4_0_5"/>
<dbReference type="Proteomes" id="UP000000552">
    <property type="component" value="Chromosome"/>
</dbReference>
<dbReference type="GO" id="GO:0022625">
    <property type="term" value="C:cytosolic large ribosomal subunit"/>
    <property type="evidence" value="ECO:0007669"/>
    <property type="project" value="TreeGrafter"/>
</dbReference>
<dbReference type="GO" id="GO:0019843">
    <property type="term" value="F:rRNA binding"/>
    <property type="evidence" value="ECO:0007669"/>
    <property type="project" value="UniProtKB-UniRule"/>
</dbReference>
<dbReference type="GO" id="GO:0003735">
    <property type="term" value="F:structural constituent of ribosome"/>
    <property type="evidence" value="ECO:0007669"/>
    <property type="project" value="InterPro"/>
</dbReference>
<dbReference type="GO" id="GO:0006412">
    <property type="term" value="P:translation"/>
    <property type="evidence" value="ECO:0007669"/>
    <property type="project" value="UniProtKB-UniRule"/>
</dbReference>
<dbReference type="Gene3D" id="3.100.10.10">
    <property type="match status" value="1"/>
</dbReference>
<dbReference type="HAMAP" id="MF_01341">
    <property type="entry name" value="Ribosomal_uL15"/>
    <property type="match status" value="1"/>
</dbReference>
<dbReference type="InterPro" id="IPR030878">
    <property type="entry name" value="Ribosomal_uL15"/>
</dbReference>
<dbReference type="InterPro" id="IPR021131">
    <property type="entry name" value="Ribosomal_uL15/eL18"/>
</dbReference>
<dbReference type="InterPro" id="IPR036227">
    <property type="entry name" value="Ribosomal_uL15/eL18_sf"/>
</dbReference>
<dbReference type="InterPro" id="IPR005749">
    <property type="entry name" value="Ribosomal_uL15_bac-type"/>
</dbReference>
<dbReference type="InterPro" id="IPR001196">
    <property type="entry name" value="Ribosomal_uL15_CS"/>
</dbReference>
<dbReference type="NCBIfam" id="TIGR01071">
    <property type="entry name" value="rplO_bact"/>
    <property type="match status" value="1"/>
</dbReference>
<dbReference type="PANTHER" id="PTHR12934">
    <property type="entry name" value="50S RIBOSOMAL PROTEIN L15"/>
    <property type="match status" value="1"/>
</dbReference>
<dbReference type="PANTHER" id="PTHR12934:SF11">
    <property type="entry name" value="LARGE RIBOSOMAL SUBUNIT PROTEIN UL15M"/>
    <property type="match status" value="1"/>
</dbReference>
<dbReference type="Pfam" id="PF00828">
    <property type="entry name" value="Ribosomal_L27A"/>
    <property type="match status" value="1"/>
</dbReference>
<dbReference type="SUPFAM" id="SSF52080">
    <property type="entry name" value="Ribosomal proteins L15p and L18e"/>
    <property type="match status" value="1"/>
</dbReference>
<dbReference type="PROSITE" id="PS00475">
    <property type="entry name" value="RIBOSOMAL_L15"/>
    <property type="match status" value="1"/>
</dbReference>
<comment type="function">
    <text evidence="1">Binds to the 23S rRNA.</text>
</comment>
<comment type="subunit">
    <text evidence="1">Part of the 50S ribosomal subunit.</text>
</comment>
<comment type="similarity">
    <text evidence="1">Belongs to the universal ribosomal protein uL15 family.</text>
</comment>
<evidence type="ECO:0000255" key="1">
    <source>
        <dbReference type="HAMAP-Rule" id="MF_01341"/>
    </source>
</evidence>
<evidence type="ECO:0000256" key="2">
    <source>
        <dbReference type="SAM" id="MobiDB-lite"/>
    </source>
</evidence>
<evidence type="ECO:0000305" key="3"/>
<name>RL15_RHILO</name>
<protein>
    <recommendedName>
        <fullName evidence="1">Large ribosomal subunit protein uL15</fullName>
    </recommendedName>
    <alternativeName>
        <fullName evidence="3">50S ribosomal protein L15</fullName>
    </alternativeName>
</protein>
<reference key="1">
    <citation type="journal article" date="2000" name="DNA Res.">
        <title>Complete genome structure of the nitrogen-fixing symbiotic bacterium Mesorhizobium loti.</title>
        <authorList>
            <person name="Kaneko T."/>
            <person name="Nakamura Y."/>
            <person name="Sato S."/>
            <person name="Asamizu E."/>
            <person name="Kato T."/>
            <person name="Sasamoto S."/>
            <person name="Watanabe A."/>
            <person name="Idesawa K."/>
            <person name="Ishikawa A."/>
            <person name="Kawashima K."/>
            <person name="Kimura T."/>
            <person name="Kishida Y."/>
            <person name="Kiyokawa C."/>
            <person name="Kohara M."/>
            <person name="Matsumoto M."/>
            <person name="Matsuno A."/>
            <person name="Mochizuki Y."/>
            <person name="Nakayama S."/>
            <person name="Nakazaki N."/>
            <person name="Shimpo S."/>
            <person name="Sugimoto M."/>
            <person name="Takeuchi C."/>
            <person name="Yamada M."/>
            <person name="Tabata S."/>
        </authorList>
    </citation>
    <scope>NUCLEOTIDE SEQUENCE [LARGE SCALE GENOMIC DNA]</scope>
    <source>
        <strain>LMG 29417 / CECT 9101 / MAFF 303099</strain>
    </source>
</reference>
<accession>Q98N38</accession>
<proteinExistence type="inferred from homology"/>
<feature type="chain" id="PRO_0000104791" description="Large ribosomal subunit protein uL15">
    <location>
        <begin position="1"/>
        <end position="157"/>
    </location>
</feature>
<feature type="region of interest" description="Disordered" evidence="2">
    <location>
        <begin position="1"/>
        <end position="39"/>
    </location>
</feature>
<feature type="compositionally biased region" description="Basic and acidic residues" evidence="2">
    <location>
        <begin position="1"/>
        <end position="13"/>
    </location>
</feature>
<feature type="compositionally biased region" description="Gly residues" evidence="2">
    <location>
        <begin position="21"/>
        <end position="35"/>
    </location>
</feature>
<gene>
    <name evidence="1" type="primary">rplO</name>
    <name type="ordered locus">mlr0318</name>
</gene>
<keyword id="KW-0687">Ribonucleoprotein</keyword>
<keyword id="KW-0689">Ribosomal protein</keyword>
<keyword id="KW-0694">RNA-binding</keyword>
<keyword id="KW-0699">rRNA-binding</keyword>
<sequence length="157" mass="16413">MKLNDLRDKDGATHSKKRLGRGIGSGSGKTAGRGVKGQKARSGVAINGFEGGQMPLYRRLPKRGFNNIFAKSFVVVSLARIQEAVDAKKLDAKATVTAEALVAAGVIRRVKDGVRVLSDGELKAKLAFDVAGASKAAIEKIEKAGGSVKLPEKAAAE</sequence>
<organism>
    <name type="scientific">Mesorhizobium japonicum (strain LMG 29417 / CECT 9101 / MAFF 303099)</name>
    <name type="common">Mesorhizobium loti (strain MAFF 303099)</name>
    <dbReference type="NCBI Taxonomy" id="266835"/>
    <lineage>
        <taxon>Bacteria</taxon>
        <taxon>Pseudomonadati</taxon>
        <taxon>Pseudomonadota</taxon>
        <taxon>Alphaproteobacteria</taxon>
        <taxon>Hyphomicrobiales</taxon>
        <taxon>Phyllobacteriaceae</taxon>
        <taxon>Mesorhizobium</taxon>
    </lineage>
</organism>